<accession>B1J0S8</accession>
<name>ACDH_ECOLC</name>
<sequence length="316" mass="33442">MSKRKVAIIGSGNIGTDLMIKILRHGQHLEMAVMVGIDPQSDGLARARRMGVATTHEGVIGLMNMPEFADIDIVFDATSAGAHVKNDAALREAKPDIRLIDLTPAAIGPYCVPVVNLEANVDQLNVNMVTCGGQATIPMVAAVSRVARVHYAEIIASIASKSAGPGTRANIDEFTETTSRAIEVVGGAAKGKAIIVLNPAEPPLMMRDTVYVLSDEASQDDIEASINEMAEAVQAYVPGYRLKQRVQFEVIPQDKPVNLPGVGQFSGLKTAVWLEVEGAAHYLPAYAGNLDIMTSSALATAEKMAQSLARKAGEAA</sequence>
<reference key="1">
    <citation type="submission" date="2008-02" db="EMBL/GenBank/DDBJ databases">
        <title>Complete sequence of Escherichia coli C str. ATCC 8739.</title>
        <authorList>
            <person name="Copeland A."/>
            <person name="Lucas S."/>
            <person name="Lapidus A."/>
            <person name="Glavina del Rio T."/>
            <person name="Dalin E."/>
            <person name="Tice H."/>
            <person name="Bruce D."/>
            <person name="Goodwin L."/>
            <person name="Pitluck S."/>
            <person name="Kiss H."/>
            <person name="Brettin T."/>
            <person name="Detter J.C."/>
            <person name="Han C."/>
            <person name="Kuske C.R."/>
            <person name="Schmutz J."/>
            <person name="Larimer F."/>
            <person name="Land M."/>
            <person name="Hauser L."/>
            <person name="Kyrpides N."/>
            <person name="Mikhailova N."/>
            <person name="Ingram L."/>
            <person name="Richardson P."/>
        </authorList>
    </citation>
    <scope>NUCLEOTIDE SEQUENCE [LARGE SCALE GENOMIC DNA]</scope>
    <source>
        <strain>ATCC 8739 / DSM 1576 / NBRC 3972 / NCIMB 8545 / WDCM 00012 / Crooks</strain>
    </source>
</reference>
<organism>
    <name type="scientific">Escherichia coli (strain ATCC 8739 / DSM 1576 / NBRC 3972 / NCIMB 8545 / WDCM 00012 / Crooks)</name>
    <dbReference type="NCBI Taxonomy" id="481805"/>
    <lineage>
        <taxon>Bacteria</taxon>
        <taxon>Pseudomonadati</taxon>
        <taxon>Pseudomonadota</taxon>
        <taxon>Gammaproteobacteria</taxon>
        <taxon>Enterobacterales</taxon>
        <taxon>Enterobacteriaceae</taxon>
        <taxon>Escherichia</taxon>
    </lineage>
</organism>
<gene>
    <name evidence="1" type="primary">mhpF</name>
    <name type="ordered locus">EcolC_3274</name>
</gene>
<feature type="chain" id="PRO_0000387660" description="Acetaldehyde dehydrogenase">
    <location>
        <begin position="1"/>
        <end position="316"/>
    </location>
</feature>
<feature type="active site" description="Acyl-thioester intermediate" evidence="1">
    <location>
        <position position="131"/>
    </location>
</feature>
<feature type="binding site" evidence="1">
    <location>
        <begin position="11"/>
        <end position="14"/>
    </location>
    <ligand>
        <name>NAD(+)</name>
        <dbReference type="ChEBI" id="CHEBI:57540"/>
    </ligand>
</feature>
<feature type="binding site" evidence="1">
    <location>
        <begin position="162"/>
        <end position="170"/>
    </location>
    <ligand>
        <name>NAD(+)</name>
        <dbReference type="ChEBI" id="CHEBI:57540"/>
    </ligand>
</feature>
<feature type="binding site" evidence="1">
    <location>
        <position position="289"/>
    </location>
    <ligand>
        <name>NAD(+)</name>
        <dbReference type="ChEBI" id="CHEBI:57540"/>
    </ligand>
</feature>
<dbReference type="EC" id="1.2.1.10" evidence="1"/>
<dbReference type="EMBL" id="CP000946">
    <property type="protein sequence ID" value="ACA78896.1"/>
    <property type="molecule type" value="Genomic_DNA"/>
</dbReference>
<dbReference type="RefSeq" id="WP_000044314.1">
    <property type="nucleotide sequence ID" value="NZ_MTFT01000010.1"/>
</dbReference>
<dbReference type="SMR" id="B1J0S8"/>
<dbReference type="GeneID" id="93777104"/>
<dbReference type="KEGG" id="ecl:EcolC_3274"/>
<dbReference type="HOGENOM" id="CLU_062208_0_0_6"/>
<dbReference type="UniPathway" id="UPA00714"/>
<dbReference type="GO" id="GO:0008774">
    <property type="term" value="F:acetaldehyde dehydrogenase (acetylating) activity"/>
    <property type="evidence" value="ECO:0007669"/>
    <property type="project" value="UniProtKB-UniRule"/>
</dbReference>
<dbReference type="GO" id="GO:0051287">
    <property type="term" value="F:NAD binding"/>
    <property type="evidence" value="ECO:0007669"/>
    <property type="project" value="UniProtKB-UniRule"/>
</dbReference>
<dbReference type="GO" id="GO:0019380">
    <property type="term" value="P:3-phenylpropionate catabolic process"/>
    <property type="evidence" value="ECO:0007669"/>
    <property type="project" value="UniProtKB-UniRule"/>
</dbReference>
<dbReference type="CDD" id="cd23933">
    <property type="entry name" value="ALDH_C"/>
    <property type="match status" value="1"/>
</dbReference>
<dbReference type="FunFam" id="3.30.360.10:FF:000021">
    <property type="entry name" value="Acetaldehyde dehydrogenase"/>
    <property type="match status" value="1"/>
</dbReference>
<dbReference type="Gene3D" id="3.30.360.10">
    <property type="entry name" value="Dihydrodipicolinate Reductase, domain 2"/>
    <property type="match status" value="1"/>
</dbReference>
<dbReference type="Gene3D" id="3.40.50.720">
    <property type="entry name" value="NAD(P)-binding Rossmann-like Domain"/>
    <property type="match status" value="1"/>
</dbReference>
<dbReference type="HAMAP" id="MF_01657">
    <property type="entry name" value="Ac_ald_DH_ac"/>
    <property type="match status" value="1"/>
</dbReference>
<dbReference type="InterPro" id="IPR003361">
    <property type="entry name" value="Acetaldehyde_dehydrogenase"/>
</dbReference>
<dbReference type="InterPro" id="IPR015426">
    <property type="entry name" value="Acetylaldehyde_DH_C"/>
</dbReference>
<dbReference type="InterPro" id="IPR036291">
    <property type="entry name" value="NAD(P)-bd_dom_sf"/>
</dbReference>
<dbReference type="InterPro" id="IPR000534">
    <property type="entry name" value="Semialdehyde_DH_NAD-bd"/>
</dbReference>
<dbReference type="NCBIfam" id="TIGR03215">
    <property type="entry name" value="ac_ald_DH_ac"/>
    <property type="match status" value="1"/>
</dbReference>
<dbReference type="NCBIfam" id="NF006157">
    <property type="entry name" value="PRK08300.1"/>
    <property type="match status" value="1"/>
</dbReference>
<dbReference type="Pfam" id="PF09290">
    <property type="entry name" value="AcetDehyd-dimer"/>
    <property type="match status" value="1"/>
</dbReference>
<dbReference type="Pfam" id="PF01118">
    <property type="entry name" value="Semialdhyde_dh"/>
    <property type="match status" value="1"/>
</dbReference>
<dbReference type="PIRSF" id="PIRSF015689">
    <property type="entry name" value="Actaldh_dh_actl"/>
    <property type="match status" value="1"/>
</dbReference>
<dbReference type="SMART" id="SM00859">
    <property type="entry name" value="Semialdhyde_dh"/>
    <property type="match status" value="1"/>
</dbReference>
<dbReference type="SUPFAM" id="SSF55347">
    <property type="entry name" value="Glyceraldehyde-3-phosphate dehydrogenase-like, C-terminal domain"/>
    <property type="match status" value="1"/>
</dbReference>
<dbReference type="SUPFAM" id="SSF51735">
    <property type="entry name" value="NAD(P)-binding Rossmann-fold domains"/>
    <property type="match status" value="1"/>
</dbReference>
<proteinExistence type="inferred from homology"/>
<comment type="function">
    <text evidence="1">Catalyzes the conversion of acetaldehyde to acetyl-CoA, using NAD(+) and coenzyme A. Is the final enzyme in the meta-cleavage pathway for the degradation of aromatic compounds.</text>
</comment>
<comment type="catalytic activity">
    <reaction evidence="1">
        <text>acetaldehyde + NAD(+) + CoA = acetyl-CoA + NADH + H(+)</text>
        <dbReference type="Rhea" id="RHEA:23288"/>
        <dbReference type="ChEBI" id="CHEBI:15343"/>
        <dbReference type="ChEBI" id="CHEBI:15378"/>
        <dbReference type="ChEBI" id="CHEBI:57287"/>
        <dbReference type="ChEBI" id="CHEBI:57288"/>
        <dbReference type="ChEBI" id="CHEBI:57540"/>
        <dbReference type="ChEBI" id="CHEBI:57945"/>
        <dbReference type="EC" id="1.2.1.10"/>
    </reaction>
</comment>
<comment type="pathway">
    <text evidence="1">Aromatic compound metabolism; 3-phenylpropanoate degradation.</text>
</comment>
<comment type="subunit">
    <text evidence="1">Interacts with MhpE.</text>
</comment>
<comment type="similarity">
    <text evidence="1">Belongs to the acetaldehyde dehydrogenase family.</text>
</comment>
<keyword id="KW-0058">Aromatic hydrocarbons catabolism</keyword>
<keyword id="KW-0520">NAD</keyword>
<keyword id="KW-0560">Oxidoreductase</keyword>
<evidence type="ECO:0000255" key="1">
    <source>
        <dbReference type="HAMAP-Rule" id="MF_01657"/>
    </source>
</evidence>
<protein>
    <recommendedName>
        <fullName evidence="1">Acetaldehyde dehydrogenase</fullName>
        <ecNumber evidence="1">1.2.1.10</ecNumber>
    </recommendedName>
    <alternativeName>
        <fullName evidence="1">Acetaldehyde dehydrogenase [acetylating]</fullName>
    </alternativeName>
</protein>